<keyword id="KW-0157">Chromophore</keyword>
<keyword id="KW-0238">DNA-binding</keyword>
<keyword id="KW-0274">FAD</keyword>
<keyword id="KW-0285">Flavoprotein</keyword>
<keyword id="KW-0678">Repressor</keyword>
<keyword id="KW-0804">Transcription</keyword>
<keyword id="KW-0805">Transcription regulation</keyword>
<dbReference type="EMBL" id="BA000032">
    <property type="protein sequence ID" value="BAC61546.1"/>
    <property type="molecule type" value="Genomic_DNA"/>
</dbReference>
<dbReference type="RefSeq" id="NP_799713.1">
    <property type="nucleotide sequence ID" value="NC_004605.1"/>
</dbReference>
<dbReference type="RefSeq" id="WP_005479934.1">
    <property type="nucleotide sequence ID" value="NC_004605.1"/>
</dbReference>
<dbReference type="SMR" id="Q87JP5"/>
<dbReference type="GeneID" id="1190891"/>
<dbReference type="KEGG" id="vpa:VPA0203"/>
<dbReference type="PATRIC" id="fig|223926.6.peg.3158"/>
<dbReference type="eggNOG" id="COG0415">
    <property type="taxonomic scope" value="Bacteria"/>
</dbReference>
<dbReference type="HOGENOM" id="CLU_010348_6_2_6"/>
<dbReference type="Proteomes" id="UP000002493">
    <property type="component" value="Chromosome 2"/>
</dbReference>
<dbReference type="GO" id="GO:0003677">
    <property type="term" value="F:DNA binding"/>
    <property type="evidence" value="ECO:0007669"/>
    <property type="project" value="UniProtKB-KW"/>
</dbReference>
<dbReference type="GO" id="GO:0003913">
    <property type="term" value="F:DNA photolyase activity"/>
    <property type="evidence" value="ECO:0007669"/>
    <property type="project" value="InterPro"/>
</dbReference>
<dbReference type="GO" id="GO:0071949">
    <property type="term" value="F:FAD binding"/>
    <property type="evidence" value="ECO:0007669"/>
    <property type="project" value="TreeGrafter"/>
</dbReference>
<dbReference type="GO" id="GO:0000719">
    <property type="term" value="P:photoreactive repair"/>
    <property type="evidence" value="ECO:0007669"/>
    <property type="project" value="TreeGrafter"/>
</dbReference>
<dbReference type="Gene3D" id="1.25.40.80">
    <property type="match status" value="1"/>
</dbReference>
<dbReference type="Gene3D" id="1.10.579.10">
    <property type="entry name" value="DNA Cyclobutane Dipyrimidine Photolyase, subunit A, domain 3"/>
    <property type="match status" value="1"/>
</dbReference>
<dbReference type="Gene3D" id="3.40.50.620">
    <property type="entry name" value="HUPs"/>
    <property type="match status" value="1"/>
</dbReference>
<dbReference type="InterPro" id="IPR014133">
    <property type="entry name" value="Cry_DASH"/>
</dbReference>
<dbReference type="InterPro" id="IPR036134">
    <property type="entry name" value="Crypto/Photolyase_FAD-like_sf"/>
</dbReference>
<dbReference type="InterPro" id="IPR036155">
    <property type="entry name" value="Crypto/Photolyase_N_sf"/>
</dbReference>
<dbReference type="InterPro" id="IPR005101">
    <property type="entry name" value="Cryptochr/Photolyase_FAD-bd"/>
</dbReference>
<dbReference type="InterPro" id="IPR002081">
    <property type="entry name" value="Cryptochrome/DNA_photolyase_1"/>
</dbReference>
<dbReference type="InterPro" id="IPR006050">
    <property type="entry name" value="DNA_photolyase_N"/>
</dbReference>
<dbReference type="InterPro" id="IPR014729">
    <property type="entry name" value="Rossmann-like_a/b/a_fold"/>
</dbReference>
<dbReference type="NCBIfam" id="TIGR02765">
    <property type="entry name" value="crypto_DASH"/>
    <property type="match status" value="1"/>
</dbReference>
<dbReference type="PANTHER" id="PTHR11455">
    <property type="entry name" value="CRYPTOCHROME"/>
    <property type="match status" value="1"/>
</dbReference>
<dbReference type="PANTHER" id="PTHR11455:SF22">
    <property type="entry name" value="CRYPTOCHROME DASH"/>
    <property type="match status" value="1"/>
</dbReference>
<dbReference type="Pfam" id="PF00875">
    <property type="entry name" value="DNA_photolyase"/>
    <property type="match status" value="1"/>
</dbReference>
<dbReference type="Pfam" id="PF03441">
    <property type="entry name" value="FAD_binding_7"/>
    <property type="match status" value="1"/>
</dbReference>
<dbReference type="PRINTS" id="PR00147">
    <property type="entry name" value="DNAPHOTLYASE"/>
</dbReference>
<dbReference type="SUPFAM" id="SSF48173">
    <property type="entry name" value="Cryptochrome/photolyase FAD-binding domain"/>
    <property type="match status" value="1"/>
</dbReference>
<dbReference type="SUPFAM" id="SSF52425">
    <property type="entry name" value="Cryptochrome/photolyase, N-terminal domain"/>
    <property type="match status" value="1"/>
</dbReference>
<dbReference type="PROSITE" id="PS51645">
    <property type="entry name" value="PHR_CRY_ALPHA_BETA"/>
    <property type="match status" value="1"/>
</dbReference>
<sequence length="445" mass="51570">MKKKIGLYWFTFDLRLHDNSLLVDASSFLDELVCLYCRPSVTPFLHHFAQEVTLGRARQKFIDASLCELNDALGQLGQRLWTLDLPPYQALKYAIQYLSVTHLYSDAMAGSDEQSILHKLQDEYPHLVIVQHSVRSLFDESKLPFTLPDLPETFTQFRKCVEGIDIAHPIDAPSRLPPMPKGAQLPTLSSFYFDESALFSGGEWSGLAHCRRYFFSGLASSYKETRNGLDGMAYSTKFSPWLALGCVSPRMIHAMLKQYEQTQGANDSTYWIYFELLWREYFYWYARCYQQRLFRFGGIRNQPPLTSFYAHRFQQWKNGTTPYPIVNACMHQLNHTGYMSNRGRQLVASCLVHELGLDWRYGAAYFETQLIDYDVGSNWGNWQYLAGVGADPRGSRQFNLEKQTQMYDPNHEFIERWQGRDSRAQQDVVDMVGWPITTQQENGDK</sequence>
<reference key="1">
    <citation type="journal article" date="2003" name="Lancet">
        <title>Genome sequence of Vibrio parahaemolyticus: a pathogenic mechanism distinct from that of V. cholerae.</title>
        <authorList>
            <person name="Makino K."/>
            <person name="Oshima K."/>
            <person name="Kurokawa K."/>
            <person name="Yokoyama K."/>
            <person name="Uda T."/>
            <person name="Tagomori K."/>
            <person name="Iijima Y."/>
            <person name="Najima M."/>
            <person name="Nakano M."/>
            <person name="Yamashita A."/>
            <person name="Kubota Y."/>
            <person name="Kimura S."/>
            <person name="Yasunaga T."/>
            <person name="Honda T."/>
            <person name="Shinagawa H."/>
            <person name="Hattori M."/>
            <person name="Iida T."/>
        </authorList>
    </citation>
    <scope>NUCLEOTIDE SEQUENCE [LARGE SCALE GENOMIC DNA]</scope>
    <source>
        <strain>RIMD 2210633</strain>
    </source>
</reference>
<gene>
    <name type="primary">cry</name>
    <name type="ordered locus">VPA0203</name>
</gene>
<name>CRYD_VIBPA</name>
<feature type="chain" id="PRO_0000235313" description="Cryptochrome DASH">
    <location>
        <begin position="1"/>
        <end position="445"/>
    </location>
</feature>
<feature type="domain" description="Photolyase/cryptochrome alpha/beta">
    <location>
        <begin position="4"/>
        <end position="137"/>
    </location>
</feature>
<proteinExistence type="inferred from homology"/>
<accession>Q87JP5</accession>
<organism>
    <name type="scientific">Vibrio parahaemolyticus serotype O3:K6 (strain RIMD 2210633)</name>
    <dbReference type="NCBI Taxonomy" id="223926"/>
    <lineage>
        <taxon>Bacteria</taxon>
        <taxon>Pseudomonadati</taxon>
        <taxon>Pseudomonadota</taxon>
        <taxon>Gammaproteobacteria</taxon>
        <taxon>Vibrionales</taxon>
        <taxon>Vibrionaceae</taxon>
        <taxon>Vibrio</taxon>
    </lineage>
</organism>
<comment type="function">
    <text evidence="1">May have a photoreceptor function. Binds DNA; probably functions as a transcriptional repressor (By similarity).</text>
</comment>
<comment type="cofactor">
    <cofactor evidence="1">
        <name>FAD</name>
        <dbReference type="ChEBI" id="CHEBI:57692"/>
    </cofactor>
    <text evidence="1">Binds 1 FAD per subunit.</text>
</comment>
<comment type="cofactor">
    <cofactor evidence="1">
        <name>(6R)-5,10-methylene-5,6,7,8-tetrahydrofolate</name>
        <dbReference type="ChEBI" id="CHEBI:15636"/>
    </cofactor>
    <text evidence="1">Binds 1 5,10-methenyltetrahydrofolate (MTHF) per subunit.</text>
</comment>
<comment type="similarity">
    <text evidence="2">Belongs to the DNA photolyase class-1 family.</text>
</comment>
<evidence type="ECO:0000250" key="1"/>
<evidence type="ECO:0000305" key="2"/>
<protein>
    <recommendedName>
        <fullName>Cryptochrome DASH</fullName>
    </recommendedName>
</protein>